<protein>
    <recommendedName>
        <fullName evidence="1">Biotin synthase</fullName>
        <ecNumber evidence="1">2.8.1.6</ecNumber>
    </recommendedName>
</protein>
<feature type="chain" id="PRO_0000185559" description="Biotin synthase">
    <location>
        <begin position="1"/>
        <end position="345"/>
    </location>
</feature>
<feature type="domain" description="Radical SAM core" evidence="2">
    <location>
        <begin position="66"/>
        <end position="291"/>
    </location>
</feature>
<feature type="binding site" evidence="1">
    <location>
        <position position="81"/>
    </location>
    <ligand>
        <name>[4Fe-4S] cluster</name>
        <dbReference type="ChEBI" id="CHEBI:49883"/>
        <note>4Fe-4S-S-AdoMet</note>
    </ligand>
</feature>
<feature type="binding site" evidence="1">
    <location>
        <position position="85"/>
    </location>
    <ligand>
        <name>[4Fe-4S] cluster</name>
        <dbReference type="ChEBI" id="CHEBI:49883"/>
        <note>4Fe-4S-S-AdoMet</note>
    </ligand>
</feature>
<feature type="binding site" evidence="1">
    <location>
        <position position="88"/>
    </location>
    <ligand>
        <name>[4Fe-4S] cluster</name>
        <dbReference type="ChEBI" id="CHEBI:49883"/>
        <note>4Fe-4S-S-AdoMet</note>
    </ligand>
</feature>
<feature type="binding site" evidence="1">
    <location>
        <position position="124"/>
    </location>
    <ligand>
        <name>[2Fe-2S] cluster</name>
        <dbReference type="ChEBI" id="CHEBI:190135"/>
    </ligand>
</feature>
<feature type="binding site" evidence="1">
    <location>
        <position position="157"/>
    </location>
    <ligand>
        <name>[2Fe-2S] cluster</name>
        <dbReference type="ChEBI" id="CHEBI:190135"/>
    </ligand>
</feature>
<feature type="binding site" evidence="1">
    <location>
        <position position="216"/>
    </location>
    <ligand>
        <name>[2Fe-2S] cluster</name>
        <dbReference type="ChEBI" id="CHEBI:190135"/>
    </ligand>
</feature>
<feature type="binding site" evidence="1">
    <location>
        <position position="286"/>
    </location>
    <ligand>
        <name>[2Fe-2S] cluster</name>
        <dbReference type="ChEBI" id="CHEBI:190135"/>
    </ligand>
</feature>
<feature type="sequence conflict" description="In Ref. 1; AAA17072." evidence="3" ref="1">
    <original>RFA</original>
    <variation>PFR</variation>
    <location>
        <begin position="286"/>
        <end position="288"/>
    </location>
</feature>
<name>BIOB_MYCLE</name>
<accession>P46715</accession>
<gene>
    <name evidence="1" type="primary">bioB</name>
    <name type="ordered locus">ML1220</name>
    <name type="ORF">B1170_C3_228</name>
</gene>
<comment type="function">
    <text evidence="1">Catalyzes the conversion of dethiobiotin (DTB) to biotin by the insertion of a sulfur atom into dethiobiotin via a radical-based mechanism.</text>
</comment>
<comment type="catalytic activity">
    <reaction evidence="1">
        <text>(4R,5S)-dethiobiotin + (sulfur carrier)-SH + 2 reduced [2Fe-2S]-[ferredoxin] + 2 S-adenosyl-L-methionine = (sulfur carrier)-H + biotin + 2 5'-deoxyadenosine + 2 L-methionine + 2 oxidized [2Fe-2S]-[ferredoxin]</text>
        <dbReference type="Rhea" id="RHEA:22060"/>
        <dbReference type="Rhea" id="RHEA-COMP:10000"/>
        <dbReference type="Rhea" id="RHEA-COMP:10001"/>
        <dbReference type="Rhea" id="RHEA-COMP:14737"/>
        <dbReference type="Rhea" id="RHEA-COMP:14739"/>
        <dbReference type="ChEBI" id="CHEBI:17319"/>
        <dbReference type="ChEBI" id="CHEBI:29917"/>
        <dbReference type="ChEBI" id="CHEBI:33737"/>
        <dbReference type="ChEBI" id="CHEBI:33738"/>
        <dbReference type="ChEBI" id="CHEBI:57586"/>
        <dbReference type="ChEBI" id="CHEBI:57844"/>
        <dbReference type="ChEBI" id="CHEBI:59789"/>
        <dbReference type="ChEBI" id="CHEBI:64428"/>
        <dbReference type="ChEBI" id="CHEBI:149473"/>
        <dbReference type="EC" id="2.8.1.6"/>
    </reaction>
</comment>
<comment type="cofactor">
    <cofactor evidence="1">
        <name>[4Fe-4S] cluster</name>
        <dbReference type="ChEBI" id="CHEBI:49883"/>
    </cofactor>
    <text evidence="1">Binds 1 [4Fe-4S] cluster. The cluster is coordinated with 3 cysteines and an exchangeable S-adenosyl-L-methionine.</text>
</comment>
<comment type="cofactor">
    <cofactor evidence="1">
        <name>[2Fe-2S] cluster</name>
        <dbReference type="ChEBI" id="CHEBI:190135"/>
    </cofactor>
    <text evidence="1">Binds 1 [2Fe-2S] cluster. The cluster is coordinated with 3 cysteines and 1 arginine.</text>
</comment>
<comment type="pathway">
    <text evidence="1">Cofactor biosynthesis; biotin biosynthesis; biotin from 7,8-diaminononanoate: step 2/2.</text>
</comment>
<comment type="subunit">
    <text evidence="1">Homodimer.</text>
</comment>
<comment type="similarity">
    <text evidence="1">Belongs to the radical SAM superfamily. Biotin synthase family.</text>
</comment>
<dbReference type="EC" id="2.8.1.6" evidence="1"/>
<dbReference type="EMBL" id="U00010">
    <property type="protein sequence ID" value="AAA17072.1"/>
    <property type="molecule type" value="Genomic_DNA"/>
</dbReference>
<dbReference type="EMBL" id="AL583921">
    <property type="protein sequence ID" value="CAC31601.1"/>
    <property type="molecule type" value="Genomic_DNA"/>
</dbReference>
<dbReference type="PIR" id="F87061">
    <property type="entry name" value="F87061"/>
</dbReference>
<dbReference type="PIR" id="S72708">
    <property type="entry name" value="S72708"/>
</dbReference>
<dbReference type="RefSeq" id="NP_301883.1">
    <property type="nucleotide sequence ID" value="NC_002677.1"/>
</dbReference>
<dbReference type="RefSeq" id="WP_010908204.1">
    <property type="nucleotide sequence ID" value="NC_002677.1"/>
</dbReference>
<dbReference type="SMR" id="P46715"/>
<dbReference type="STRING" id="272631.gene:17575051"/>
<dbReference type="KEGG" id="mle:ML1220"/>
<dbReference type="PATRIC" id="fig|272631.5.peg.2240"/>
<dbReference type="Leproma" id="ML1220"/>
<dbReference type="eggNOG" id="COG0502">
    <property type="taxonomic scope" value="Bacteria"/>
</dbReference>
<dbReference type="HOGENOM" id="CLU_033172_2_1_11"/>
<dbReference type="OrthoDB" id="9786826at2"/>
<dbReference type="UniPathway" id="UPA00078">
    <property type="reaction ID" value="UER00162"/>
</dbReference>
<dbReference type="Proteomes" id="UP000000806">
    <property type="component" value="Chromosome"/>
</dbReference>
<dbReference type="GO" id="GO:0051537">
    <property type="term" value="F:2 iron, 2 sulfur cluster binding"/>
    <property type="evidence" value="ECO:0007669"/>
    <property type="project" value="UniProtKB-KW"/>
</dbReference>
<dbReference type="GO" id="GO:0051539">
    <property type="term" value="F:4 iron, 4 sulfur cluster binding"/>
    <property type="evidence" value="ECO:0007669"/>
    <property type="project" value="UniProtKB-KW"/>
</dbReference>
<dbReference type="GO" id="GO:0004076">
    <property type="term" value="F:biotin synthase activity"/>
    <property type="evidence" value="ECO:0007669"/>
    <property type="project" value="UniProtKB-UniRule"/>
</dbReference>
<dbReference type="GO" id="GO:0005506">
    <property type="term" value="F:iron ion binding"/>
    <property type="evidence" value="ECO:0007669"/>
    <property type="project" value="UniProtKB-UniRule"/>
</dbReference>
<dbReference type="GO" id="GO:0009102">
    <property type="term" value="P:biotin biosynthetic process"/>
    <property type="evidence" value="ECO:0007669"/>
    <property type="project" value="UniProtKB-UniRule"/>
</dbReference>
<dbReference type="CDD" id="cd01335">
    <property type="entry name" value="Radical_SAM"/>
    <property type="match status" value="1"/>
</dbReference>
<dbReference type="FunFam" id="3.20.20.70:FF:000026">
    <property type="entry name" value="Biotin synthase"/>
    <property type="match status" value="1"/>
</dbReference>
<dbReference type="Gene3D" id="3.20.20.70">
    <property type="entry name" value="Aldolase class I"/>
    <property type="match status" value="1"/>
</dbReference>
<dbReference type="HAMAP" id="MF_01694">
    <property type="entry name" value="BioB"/>
    <property type="match status" value="1"/>
</dbReference>
<dbReference type="InterPro" id="IPR013785">
    <property type="entry name" value="Aldolase_TIM"/>
</dbReference>
<dbReference type="InterPro" id="IPR010722">
    <property type="entry name" value="BATS_dom"/>
</dbReference>
<dbReference type="InterPro" id="IPR002684">
    <property type="entry name" value="Biotin_synth/BioAB"/>
</dbReference>
<dbReference type="InterPro" id="IPR024177">
    <property type="entry name" value="Biotin_synthase"/>
</dbReference>
<dbReference type="InterPro" id="IPR006638">
    <property type="entry name" value="Elp3/MiaA/NifB-like_rSAM"/>
</dbReference>
<dbReference type="InterPro" id="IPR007197">
    <property type="entry name" value="rSAM"/>
</dbReference>
<dbReference type="NCBIfam" id="TIGR00433">
    <property type="entry name" value="bioB"/>
    <property type="match status" value="1"/>
</dbReference>
<dbReference type="PANTHER" id="PTHR22976">
    <property type="entry name" value="BIOTIN SYNTHASE"/>
    <property type="match status" value="1"/>
</dbReference>
<dbReference type="PANTHER" id="PTHR22976:SF2">
    <property type="entry name" value="BIOTIN SYNTHASE, MITOCHONDRIAL"/>
    <property type="match status" value="1"/>
</dbReference>
<dbReference type="Pfam" id="PF06968">
    <property type="entry name" value="BATS"/>
    <property type="match status" value="1"/>
</dbReference>
<dbReference type="Pfam" id="PF04055">
    <property type="entry name" value="Radical_SAM"/>
    <property type="match status" value="1"/>
</dbReference>
<dbReference type="PIRSF" id="PIRSF001619">
    <property type="entry name" value="Biotin_synth"/>
    <property type="match status" value="1"/>
</dbReference>
<dbReference type="SFLD" id="SFLDG01060">
    <property type="entry name" value="BATS_domain_containing"/>
    <property type="match status" value="1"/>
</dbReference>
<dbReference type="SFLD" id="SFLDG01278">
    <property type="entry name" value="biotin_synthase_like"/>
    <property type="match status" value="1"/>
</dbReference>
<dbReference type="SMART" id="SM00876">
    <property type="entry name" value="BATS"/>
    <property type="match status" value="1"/>
</dbReference>
<dbReference type="SMART" id="SM00729">
    <property type="entry name" value="Elp3"/>
    <property type="match status" value="1"/>
</dbReference>
<dbReference type="SUPFAM" id="SSF102114">
    <property type="entry name" value="Radical SAM enzymes"/>
    <property type="match status" value="1"/>
</dbReference>
<dbReference type="PROSITE" id="PS51918">
    <property type="entry name" value="RADICAL_SAM"/>
    <property type="match status" value="1"/>
</dbReference>
<reference key="1">
    <citation type="submission" date="1994-03" db="EMBL/GenBank/DDBJ databases">
        <authorList>
            <person name="Smith D.R."/>
            <person name="Robison K."/>
        </authorList>
    </citation>
    <scope>NUCLEOTIDE SEQUENCE [GENOMIC DNA]</scope>
</reference>
<reference key="2">
    <citation type="journal article" date="2001" name="Nature">
        <title>Massive gene decay in the leprosy bacillus.</title>
        <authorList>
            <person name="Cole S.T."/>
            <person name="Eiglmeier K."/>
            <person name="Parkhill J."/>
            <person name="James K.D."/>
            <person name="Thomson N.R."/>
            <person name="Wheeler P.R."/>
            <person name="Honore N."/>
            <person name="Garnier T."/>
            <person name="Churcher C.M."/>
            <person name="Harris D.E."/>
            <person name="Mungall K.L."/>
            <person name="Basham D."/>
            <person name="Brown D."/>
            <person name="Chillingworth T."/>
            <person name="Connor R."/>
            <person name="Davies R.M."/>
            <person name="Devlin K."/>
            <person name="Duthoy S."/>
            <person name="Feltwell T."/>
            <person name="Fraser A."/>
            <person name="Hamlin N."/>
            <person name="Holroyd S."/>
            <person name="Hornsby T."/>
            <person name="Jagels K."/>
            <person name="Lacroix C."/>
            <person name="Maclean J."/>
            <person name="Moule S."/>
            <person name="Murphy L.D."/>
            <person name="Oliver K."/>
            <person name="Quail M.A."/>
            <person name="Rajandream M.A."/>
            <person name="Rutherford K.M."/>
            <person name="Rutter S."/>
            <person name="Seeger K."/>
            <person name="Simon S."/>
            <person name="Simmonds M."/>
            <person name="Skelton J."/>
            <person name="Squares R."/>
            <person name="Squares S."/>
            <person name="Stevens K."/>
            <person name="Taylor K."/>
            <person name="Whitehead S."/>
            <person name="Woodward J.R."/>
            <person name="Barrell B.G."/>
        </authorList>
    </citation>
    <scope>NUCLEOTIDE SEQUENCE [LARGE SCALE GENOMIC DNA]</scope>
    <source>
        <strain>TN</strain>
    </source>
</reference>
<evidence type="ECO:0000255" key="1">
    <source>
        <dbReference type="HAMAP-Rule" id="MF_01694"/>
    </source>
</evidence>
<evidence type="ECO:0000255" key="2">
    <source>
        <dbReference type="PROSITE-ProRule" id="PRU01266"/>
    </source>
</evidence>
<evidence type="ECO:0000305" key="3"/>
<keyword id="KW-0001">2Fe-2S</keyword>
<keyword id="KW-0004">4Fe-4S</keyword>
<keyword id="KW-0093">Biotin biosynthesis</keyword>
<keyword id="KW-0408">Iron</keyword>
<keyword id="KW-0411">Iron-sulfur</keyword>
<keyword id="KW-0479">Metal-binding</keyword>
<keyword id="KW-1185">Reference proteome</keyword>
<keyword id="KW-0949">S-adenosyl-L-methionine</keyword>
<keyword id="KW-0808">Transferase</keyword>
<sequence length="345" mass="37558">MTQAGTRSTNGDTENTDILAQARQQVLERGEGLSRDQVLQMLWLPDDRLEELLALAHDVRMRWCGPEVEIEGIISLKTGGCPEDCHFCSQSGLFMSPVRSAWLDIRSLVEAAKQTAKSGATEFCIVAAVRGPDERLMSQVAAGIEAIRNEVEINIACSLGMLTVEQVEQLSGIGVHRYNHNLETARSFFTNVVTTHTWEERWQTLSMVRDAGMEVCCGGILGMGETVEQRAEFALELAELGPDEVPLNFLNPRPGTPFGALEVMPPSEALKSVAAFRLALPRTILRFAGGREITLGDLGAKQGMLGGINAVIVGNYLTTLGRPAEADLRLLDDLQMPIKALNASL</sequence>
<organism>
    <name type="scientific">Mycobacterium leprae (strain TN)</name>
    <dbReference type="NCBI Taxonomy" id="272631"/>
    <lineage>
        <taxon>Bacteria</taxon>
        <taxon>Bacillati</taxon>
        <taxon>Actinomycetota</taxon>
        <taxon>Actinomycetes</taxon>
        <taxon>Mycobacteriales</taxon>
        <taxon>Mycobacteriaceae</taxon>
        <taxon>Mycobacterium</taxon>
    </lineage>
</organism>
<proteinExistence type="inferred from homology"/>